<sequence length="77" mass="9150">MNIMITKQFDRHLKYYTTIVKVFANGIILITAYYLVFELPVGYLIGLYIIMFVVWLLVSMFFLGRLLDFMAKMDLKK</sequence>
<name>Y184_METJA</name>
<feature type="chain" id="PRO_0000106733" description="Uncharacterized protein MJ0184">
    <location>
        <begin position="1"/>
        <end position="77"/>
    </location>
</feature>
<feature type="transmembrane region" description="Helical" evidence="1">
    <location>
        <begin position="22"/>
        <end position="42"/>
    </location>
</feature>
<feature type="transmembrane region" description="Helical" evidence="1">
    <location>
        <begin position="44"/>
        <end position="64"/>
    </location>
</feature>
<gene>
    <name type="ordered locus">MJ0184</name>
</gene>
<organism>
    <name type="scientific">Methanocaldococcus jannaschii (strain ATCC 43067 / DSM 2661 / JAL-1 / JCM 10045 / NBRC 100440)</name>
    <name type="common">Methanococcus jannaschii</name>
    <dbReference type="NCBI Taxonomy" id="243232"/>
    <lineage>
        <taxon>Archaea</taxon>
        <taxon>Methanobacteriati</taxon>
        <taxon>Methanobacteriota</taxon>
        <taxon>Methanomada group</taxon>
        <taxon>Methanococci</taxon>
        <taxon>Methanococcales</taxon>
        <taxon>Methanocaldococcaceae</taxon>
        <taxon>Methanocaldococcus</taxon>
    </lineage>
</organism>
<keyword id="KW-1003">Cell membrane</keyword>
<keyword id="KW-0472">Membrane</keyword>
<keyword id="KW-1185">Reference proteome</keyword>
<keyword id="KW-0812">Transmembrane</keyword>
<keyword id="KW-1133">Transmembrane helix</keyword>
<protein>
    <recommendedName>
        <fullName>Uncharacterized protein MJ0184</fullName>
    </recommendedName>
</protein>
<comment type="subcellular location">
    <subcellularLocation>
        <location evidence="2">Cell membrane</location>
        <topology evidence="2">Multi-pass membrane protein</topology>
    </subcellularLocation>
</comment>
<reference key="1">
    <citation type="journal article" date="1996" name="Science">
        <title>Complete genome sequence of the methanogenic archaeon, Methanococcus jannaschii.</title>
        <authorList>
            <person name="Bult C.J."/>
            <person name="White O."/>
            <person name="Olsen G.J."/>
            <person name="Zhou L."/>
            <person name="Fleischmann R.D."/>
            <person name="Sutton G.G."/>
            <person name="Blake J.A."/>
            <person name="FitzGerald L.M."/>
            <person name="Clayton R.A."/>
            <person name="Gocayne J.D."/>
            <person name="Kerlavage A.R."/>
            <person name="Dougherty B.A."/>
            <person name="Tomb J.-F."/>
            <person name="Adams M.D."/>
            <person name="Reich C.I."/>
            <person name="Overbeek R."/>
            <person name="Kirkness E.F."/>
            <person name="Weinstock K.G."/>
            <person name="Merrick J.M."/>
            <person name="Glodek A."/>
            <person name="Scott J.L."/>
            <person name="Geoghagen N.S.M."/>
            <person name="Weidman J.F."/>
            <person name="Fuhrmann J.L."/>
            <person name="Nguyen D."/>
            <person name="Utterback T.R."/>
            <person name="Kelley J.M."/>
            <person name="Peterson J.D."/>
            <person name="Sadow P.W."/>
            <person name="Hanna M.C."/>
            <person name="Cotton M.D."/>
            <person name="Roberts K.M."/>
            <person name="Hurst M.A."/>
            <person name="Kaine B.P."/>
            <person name="Borodovsky M."/>
            <person name="Klenk H.-P."/>
            <person name="Fraser C.M."/>
            <person name="Smith H.O."/>
            <person name="Woese C.R."/>
            <person name="Venter J.C."/>
        </authorList>
    </citation>
    <scope>NUCLEOTIDE SEQUENCE [LARGE SCALE GENOMIC DNA]</scope>
    <source>
        <strain>ATCC 43067 / DSM 2661 / JAL-1 / JCM 10045 / NBRC 100440</strain>
    </source>
</reference>
<accession>Q57643</accession>
<evidence type="ECO:0000255" key="1"/>
<evidence type="ECO:0000305" key="2"/>
<dbReference type="EMBL" id="L77117">
    <property type="protein sequence ID" value="AAB98181.1"/>
    <property type="molecule type" value="Genomic_DNA"/>
</dbReference>
<dbReference type="PIR" id="A64323">
    <property type="entry name" value="A64323"/>
</dbReference>
<dbReference type="SMR" id="Q57643"/>
<dbReference type="STRING" id="243232.MJ_0184"/>
<dbReference type="PaxDb" id="243232-MJ_0184"/>
<dbReference type="EnsemblBacteria" id="AAB98181">
    <property type="protein sequence ID" value="AAB98181"/>
    <property type="gene ID" value="MJ_0184"/>
</dbReference>
<dbReference type="KEGG" id="mja:MJ_0184"/>
<dbReference type="HOGENOM" id="CLU_2629740_0_0_2"/>
<dbReference type="InParanoid" id="Q57643"/>
<dbReference type="Proteomes" id="UP000000805">
    <property type="component" value="Chromosome"/>
</dbReference>
<dbReference type="GO" id="GO:0005886">
    <property type="term" value="C:plasma membrane"/>
    <property type="evidence" value="ECO:0007669"/>
    <property type="project" value="UniProtKB-SubCell"/>
</dbReference>
<proteinExistence type="predicted"/>